<keyword id="KW-1003">Cell membrane</keyword>
<keyword id="KW-0406">Ion transport</keyword>
<keyword id="KW-0464">Manganese</keyword>
<keyword id="KW-0472">Membrane</keyword>
<keyword id="KW-1185">Reference proteome</keyword>
<keyword id="KW-0812">Transmembrane</keyword>
<keyword id="KW-1133">Transmembrane helix</keyword>
<keyword id="KW-0813">Transport</keyword>
<gene>
    <name evidence="1" type="primary">mntP</name>
    <name type="ordered locus">Ccel_1412</name>
</gene>
<proteinExistence type="inferred from homology"/>
<accession>B8I1G8</accession>
<reference key="1">
    <citation type="submission" date="2009-01" db="EMBL/GenBank/DDBJ databases">
        <title>Complete sequence of Clostridium cellulolyticum H10.</title>
        <authorList>
            <consortium name="US DOE Joint Genome Institute"/>
            <person name="Lucas S."/>
            <person name="Copeland A."/>
            <person name="Lapidus A."/>
            <person name="Glavina del Rio T."/>
            <person name="Dalin E."/>
            <person name="Tice H."/>
            <person name="Bruce D."/>
            <person name="Goodwin L."/>
            <person name="Pitluck S."/>
            <person name="Chertkov O."/>
            <person name="Saunders E."/>
            <person name="Brettin T."/>
            <person name="Detter J.C."/>
            <person name="Han C."/>
            <person name="Larimer F."/>
            <person name="Land M."/>
            <person name="Hauser L."/>
            <person name="Kyrpides N."/>
            <person name="Ivanova N."/>
            <person name="Zhou J."/>
            <person name="Richardson P."/>
        </authorList>
    </citation>
    <scope>NUCLEOTIDE SEQUENCE [LARGE SCALE GENOMIC DNA]</scope>
    <source>
        <strain>ATCC 35319 / DSM 5812 / JCM 6584 / H10</strain>
    </source>
</reference>
<sequence length="189" mass="20324">MSLTELILLAIGLSMDASAVSISNSLCIKKIKIKHILQMAVMFAVFQGIMPLIGYYAANSFENVIERFDHWIAFILLVIIGGKMIHESITADEEQDCSLFSLTFKLLLVQAVATSIDALAVGVSLSALNVDILYSITIIGIVTFICCTAAILLANRFGNLLGKRAGIVGGLILVGIGVKIFVQHMFFGG</sequence>
<name>MNTP_RUMCH</name>
<evidence type="ECO:0000255" key="1">
    <source>
        <dbReference type="HAMAP-Rule" id="MF_01521"/>
    </source>
</evidence>
<dbReference type="EMBL" id="CP001348">
    <property type="protein sequence ID" value="ACL75766.1"/>
    <property type="molecule type" value="Genomic_DNA"/>
</dbReference>
<dbReference type="RefSeq" id="WP_015924911.1">
    <property type="nucleotide sequence ID" value="NC_011898.1"/>
</dbReference>
<dbReference type="SMR" id="B8I1G8"/>
<dbReference type="STRING" id="394503.Ccel_1412"/>
<dbReference type="KEGG" id="cce:Ccel_1412"/>
<dbReference type="eggNOG" id="COG1971">
    <property type="taxonomic scope" value="Bacteria"/>
</dbReference>
<dbReference type="HOGENOM" id="CLU_096410_3_0_9"/>
<dbReference type="OrthoDB" id="9811590at2"/>
<dbReference type="Proteomes" id="UP000001349">
    <property type="component" value="Chromosome"/>
</dbReference>
<dbReference type="GO" id="GO:0005886">
    <property type="term" value="C:plasma membrane"/>
    <property type="evidence" value="ECO:0007669"/>
    <property type="project" value="UniProtKB-SubCell"/>
</dbReference>
<dbReference type="GO" id="GO:0005384">
    <property type="term" value="F:manganese ion transmembrane transporter activity"/>
    <property type="evidence" value="ECO:0007669"/>
    <property type="project" value="UniProtKB-UniRule"/>
</dbReference>
<dbReference type="HAMAP" id="MF_01521">
    <property type="entry name" value="MntP_pump"/>
    <property type="match status" value="1"/>
</dbReference>
<dbReference type="InterPro" id="IPR003810">
    <property type="entry name" value="Mntp/YtaF"/>
</dbReference>
<dbReference type="InterPro" id="IPR022929">
    <property type="entry name" value="Put_MntP"/>
</dbReference>
<dbReference type="PANTHER" id="PTHR35529">
    <property type="entry name" value="MANGANESE EFFLUX PUMP MNTP-RELATED"/>
    <property type="match status" value="1"/>
</dbReference>
<dbReference type="PANTHER" id="PTHR35529:SF1">
    <property type="entry name" value="MANGANESE EFFLUX PUMP MNTP-RELATED"/>
    <property type="match status" value="1"/>
</dbReference>
<dbReference type="Pfam" id="PF02659">
    <property type="entry name" value="Mntp"/>
    <property type="match status" value="1"/>
</dbReference>
<comment type="function">
    <text evidence="1">Probably functions as a manganese efflux pump.</text>
</comment>
<comment type="subcellular location">
    <subcellularLocation>
        <location evidence="1">Cell membrane</location>
        <topology evidence="1">Multi-pass membrane protein</topology>
    </subcellularLocation>
</comment>
<comment type="similarity">
    <text evidence="1">Belongs to the MntP (TC 9.B.29) family.</text>
</comment>
<protein>
    <recommendedName>
        <fullName evidence="1">Putative manganese efflux pump MntP</fullName>
    </recommendedName>
</protein>
<feature type="chain" id="PRO_1000185105" description="Putative manganese efflux pump MntP">
    <location>
        <begin position="1"/>
        <end position="189"/>
    </location>
</feature>
<feature type="transmembrane region" description="Helical" evidence="1">
    <location>
        <begin position="2"/>
        <end position="22"/>
    </location>
</feature>
<feature type="transmembrane region" description="Helical" evidence="1">
    <location>
        <begin position="36"/>
        <end position="56"/>
    </location>
</feature>
<feature type="transmembrane region" description="Helical" evidence="1">
    <location>
        <begin position="71"/>
        <end position="91"/>
    </location>
</feature>
<feature type="transmembrane region" description="Helical" evidence="1">
    <location>
        <begin position="106"/>
        <end position="126"/>
    </location>
</feature>
<feature type="transmembrane region" description="Helical" evidence="1">
    <location>
        <begin position="132"/>
        <end position="152"/>
    </location>
</feature>
<feature type="transmembrane region" description="Helical" evidence="1">
    <location>
        <begin position="167"/>
        <end position="187"/>
    </location>
</feature>
<organism>
    <name type="scientific">Ruminiclostridium cellulolyticum (strain ATCC 35319 / DSM 5812 / JCM 6584 / H10)</name>
    <name type="common">Clostridium cellulolyticum</name>
    <dbReference type="NCBI Taxonomy" id="394503"/>
    <lineage>
        <taxon>Bacteria</taxon>
        <taxon>Bacillati</taxon>
        <taxon>Bacillota</taxon>
        <taxon>Clostridia</taxon>
        <taxon>Eubacteriales</taxon>
        <taxon>Oscillospiraceae</taxon>
        <taxon>Ruminiclostridium</taxon>
    </lineage>
</organism>